<feature type="chain" id="PRO_1000046320" description="Urease subunit gamma">
    <location>
        <begin position="1"/>
        <end position="100"/>
    </location>
</feature>
<accession>A4JC44</accession>
<keyword id="KW-0963">Cytoplasm</keyword>
<keyword id="KW-0378">Hydrolase</keyword>
<name>URE3_BURVG</name>
<proteinExistence type="inferred from homology"/>
<protein>
    <recommendedName>
        <fullName evidence="1">Urease subunit gamma</fullName>
        <ecNumber evidence="1">3.5.1.5</ecNumber>
    </recommendedName>
    <alternativeName>
        <fullName evidence="1">Urea amidohydrolase subunit gamma</fullName>
    </alternativeName>
</protein>
<organism>
    <name type="scientific">Burkholderia vietnamiensis (strain G4 / LMG 22486)</name>
    <name type="common">Burkholderia cepacia (strain R1808)</name>
    <dbReference type="NCBI Taxonomy" id="269482"/>
    <lineage>
        <taxon>Bacteria</taxon>
        <taxon>Pseudomonadati</taxon>
        <taxon>Pseudomonadota</taxon>
        <taxon>Betaproteobacteria</taxon>
        <taxon>Burkholderiales</taxon>
        <taxon>Burkholderiaceae</taxon>
        <taxon>Burkholderia</taxon>
        <taxon>Burkholderia cepacia complex</taxon>
    </lineage>
</organism>
<gene>
    <name evidence="1" type="primary">ureA</name>
    <name type="ordered locus">Bcep1808_0835</name>
</gene>
<comment type="catalytic activity">
    <reaction evidence="1">
        <text>urea + 2 H2O + H(+) = hydrogencarbonate + 2 NH4(+)</text>
        <dbReference type="Rhea" id="RHEA:20557"/>
        <dbReference type="ChEBI" id="CHEBI:15377"/>
        <dbReference type="ChEBI" id="CHEBI:15378"/>
        <dbReference type="ChEBI" id="CHEBI:16199"/>
        <dbReference type="ChEBI" id="CHEBI:17544"/>
        <dbReference type="ChEBI" id="CHEBI:28938"/>
        <dbReference type="EC" id="3.5.1.5"/>
    </reaction>
</comment>
<comment type="pathway">
    <text evidence="1">Nitrogen metabolism; urea degradation; CO(2) and NH(3) from urea (urease route): step 1/1.</text>
</comment>
<comment type="subunit">
    <text evidence="1">Heterotrimer of UreA (gamma), UreB (beta) and UreC (alpha) subunits. Three heterotrimers associate to form the active enzyme.</text>
</comment>
<comment type="subcellular location">
    <subcellularLocation>
        <location evidence="1">Cytoplasm</location>
    </subcellularLocation>
</comment>
<comment type="similarity">
    <text evidence="1">Belongs to the urease gamma subunit family.</text>
</comment>
<dbReference type="EC" id="3.5.1.5" evidence="1"/>
<dbReference type="EMBL" id="CP000614">
    <property type="protein sequence ID" value="ABO53847.1"/>
    <property type="molecule type" value="Genomic_DNA"/>
</dbReference>
<dbReference type="SMR" id="A4JC44"/>
<dbReference type="KEGG" id="bvi:Bcep1808_0835"/>
<dbReference type="eggNOG" id="COG0831">
    <property type="taxonomic scope" value="Bacteria"/>
</dbReference>
<dbReference type="HOGENOM" id="CLU_145825_1_0_4"/>
<dbReference type="UniPathway" id="UPA00258">
    <property type="reaction ID" value="UER00370"/>
</dbReference>
<dbReference type="Proteomes" id="UP000002287">
    <property type="component" value="Chromosome 1"/>
</dbReference>
<dbReference type="GO" id="GO:0005737">
    <property type="term" value="C:cytoplasm"/>
    <property type="evidence" value="ECO:0007669"/>
    <property type="project" value="UniProtKB-SubCell"/>
</dbReference>
<dbReference type="GO" id="GO:0016151">
    <property type="term" value="F:nickel cation binding"/>
    <property type="evidence" value="ECO:0007669"/>
    <property type="project" value="InterPro"/>
</dbReference>
<dbReference type="GO" id="GO:0009039">
    <property type="term" value="F:urease activity"/>
    <property type="evidence" value="ECO:0007669"/>
    <property type="project" value="UniProtKB-UniRule"/>
</dbReference>
<dbReference type="GO" id="GO:0043419">
    <property type="term" value="P:urea catabolic process"/>
    <property type="evidence" value="ECO:0007669"/>
    <property type="project" value="UniProtKB-UniRule"/>
</dbReference>
<dbReference type="CDD" id="cd00390">
    <property type="entry name" value="Urease_gamma"/>
    <property type="match status" value="1"/>
</dbReference>
<dbReference type="Gene3D" id="3.30.280.10">
    <property type="entry name" value="Urease, gamma-like subunit"/>
    <property type="match status" value="1"/>
</dbReference>
<dbReference type="HAMAP" id="MF_00739">
    <property type="entry name" value="Urease_gamma"/>
    <property type="match status" value="1"/>
</dbReference>
<dbReference type="InterPro" id="IPR012010">
    <property type="entry name" value="Urease_gamma"/>
</dbReference>
<dbReference type="InterPro" id="IPR002026">
    <property type="entry name" value="Urease_gamma/gamma-beta_su"/>
</dbReference>
<dbReference type="InterPro" id="IPR036463">
    <property type="entry name" value="Urease_gamma_sf"/>
</dbReference>
<dbReference type="InterPro" id="IPR050069">
    <property type="entry name" value="Urease_subunit"/>
</dbReference>
<dbReference type="NCBIfam" id="NF009712">
    <property type="entry name" value="PRK13241.1"/>
    <property type="match status" value="1"/>
</dbReference>
<dbReference type="NCBIfam" id="TIGR00193">
    <property type="entry name" value="urease_gam"/>
    <property type="match status" value="1"/>
</dbReference>
<dbReference type="PANTHER" id="PTHR33569">
    <property type="entry name" value="UREASE"/>
    <property type="match status" value="1"/>
</dbReference>
<dbReference type="PANTHER" id="PTHR33569:SF1">
    <property type="entry name" value="UREASE"/>
    <property type="match status" value="1"/>
</dbReference>
<dbReference type="Pfam" id="PF00547">
    <property type="entry name" value="Urease_gamma"/>
    <property type="match status" value="1"/>
</dbReference>
<dbReference type="PIRSF" id="PIRSF001223">
    <property type="entry name" value="Urease_gamma"/>
    <property type="match status" value="1"/>
</dbReference>
<dbReference type="SUPFAM" id="SSF54111">
    <property type="entry name" value="Urease, gamma-subunit"/>
    <property type="match status" value="1"/>
</dbReference>
<sequence length="100" mass="11100">MKLTPREKDKLLIFTAALLAERRRARGLKLNYPEAVAFITAALMEAARDGKTVAEVMHYGTTLLTRDDVMDGVPEMIPDIQVEATFPDGTKLVTVHHPIP</sequence>
<reference key="1">
    <citation type="submission" date="2007-03" db="EMBL/GenBank/DDBJ databases">
        <title>Complete sequence of chromosome 1 of Burkholderia vietnamiensis G4.</title>
        <authorList>
            <consortium name="US DOE Joint Genome Institute"/>
            <person name="Copeland A."/>
            <person name="Lucas S."/>
            <person name="Lapidus A."/>
            <person name="Barry K."/>
            <person name="Detter J.C."/>
            <person name="Glavina del Rio T."/>
            <person name="Hammon N."/>
            <person name="Israni S."/>
            <person name="Dalin E."/>
            <person name="Tice H."/>
            <person name="Pitluck S."/>
            <person name="Chain P."/>
            <person name="Malfatti S."/>
            <person name="Shin M."/>
            <person name="Vergez L."/>
            <person name="Schmutz J."/>
            <person name="Larimer F."/>
            <person name="Land M."/>
            <person name="Hauser L."/>
            <person name="Kyrpides N."/>
            <person name="Tiedje J."/>
            <person name="Richardson P."/>
        </authorList>
    </citation>
    <scope>NUCLEOTIDE SEQUENCE [LARGE SCALE GENOMIC DNA]</scope>
    <source>
        <strain>G4 / LMG 22486</strain>
    </source>
</reference>
<evidence type="ECO:0000255" key="1">
    <source>
        <dbReference type="HAMAP-Rule" id="MF_00739"/>
    </source>
</evidence>